<reference key="1">
    <citation type="journal article" date="2007" name="Genome Biol.">
        <title>Characterization and modeling of the Haemophilus influenzae core and supragenomes based on the complete genomic sequences of Rd and 12 clinical nontypeable strains.</title>
        <authorList>
            <person name="Hogg J.S."/>
            <person name="Hu F.Z."/>
            <person name="Janto B."/>
            <person name="Boissy R."/>
            <person name="Hayes J."/>
            <person name="Keefe R."/>
            <person name="Post J.C."/>
            <person name="Ehrlich G.D."/>
        </authorList>
    </citation>
    <scope>NUCLEOTIDE SEQUENCE [LARGE SCALE GENOMIC DNA]</scope>
    <source>
        <strain>PittGG</strain>
    </source>
</reference>
<organism>
    <name type="scientific">Haemophilus influenzae (strain PittGG)</name>
    <dbReference type="NCBI Taxonomy" id="374931"/>
    <lineage>
        <taxon>Bacteria</taxon>
        <taxon>Pseudomonadati</taxon>
        <taxon>Pseudomonadota</taxon>
        <taxon>Gammaproteobacteria</taxon>
        <taxon>Pasteurellales</taxon>
        <taxon>Pasteurellaceae</taxon>
        <taxon>Haemophilus</taxon>
    </lineage>
</organism>
<name>NUDC_HAEIG</name>
<keyword id="KW-0378">Hydrolase</keyword>
<keyword id="KW-0460">Magnesium</keyword>
<keyword id="KW-0464">Manganese</keyword>
<keyword id="KW-0479">Metal-binding</keyword>
<keyword id="KW-0520">NAD</keyword>
<keyword id="KW-0862">Zinc</keyword>
<proteinExistence type="inferred from homology"/>
<dbReference type="EC" id="3.6.1.-" evidence="1"/>
<dbReference type="EC" id="3.6.1.22" evidence="1"/>
<dbReference type="EMBL" id="CP000672">
    <property type="protein sequence ID" value="ABQ99998.1"/>
    <property type="molecule type" value="Genomic_DNA"/>
</dbReference>
<dbReference type="SMR" id="A5UGU3"/>
<dbReference type="KEGG" id="hiq:CGSHiGG_05380"/>
<dbReference type="HOGENOM" id="CLU_037162_0_1_6"/>
<dbReference type="Proteomes" id="UP000001990">
    <property type="component" value="Chromosome"/>
</dbReference>
<dbReference type="GO" id="GO:0005829">
    <property type="term" value="C:cytosol"/>
    <property type="evidence" value="ECO:0007669"/>
    <property type="project" value="TreeGrafter"/>
</dbReference>
<dbReference type="GO" id="GO:0000287">
    <property type="term" value="F:magnesium ion binding"/>
    <property type="evidence" value="ECO:0007669"/>
    <property type="project" value="UniProtKB-UniRule"/>
</dbReference>
<dbReference type="GO" id="GO:0030145">
    <property type="term" value="F:manganese ion binding"/>
    <property type="evidence" value="ECO:0007669"/>
    <property type="project" value="UniProtKB-UniRule"/>
</dbReference>
<dbReference type="GO" id="GO:0000210">
    <property type="term" value="F:NAD+ diphosphatase activity"/>
    <property type="evidence" value="ECO:0007669"/>
    <property type="project" value="UniProtKB-UniRule"/>
</dbReference>
<dbReference type="GO" id="GO:0035529">
    <property type="term" value="F:NADH pyrophosphatase activity"/>
    <property type="evidence" value="ECO:0007669"/>
    <property type="project" value="TreeGrafter"/>
</dbReference>
<dbReference type="GO" id="GO:0110153">
    <property type="term" value="F:RNA NAD-cap (NMN-forming) hydrolase activity"/>
    <property type="evidence" value="ECO:0007669"/>
    <property type="project" value="RHEA"/>
</dbReference>
<dbReference type="GO" id="GO:0008270">
    <property type="term" value="F:zinc ion binding"/>
    <property type="evidence" value="ECO:0007669"/>
    <property type="project" value="UniProtKB-UniRule"/>
</dbReference>
<dbReference type="GO" id="GO:0019677">
    <property type="term" value="P:NAD catabolic process"/>
    <property type="evidence" value="ECO:0007669"/>
    <property type="project" value="TreeGrafter"/>
</dbReference>
<dbReference type="GO" id="GO:0006734">
    <property type="term" value="P:NADH metabolic process"/>
    <property type="evidence" value="ECO:0007669"/>
    <property type="project" value="TreeGrafter"/>
</dbReference>
<dbReference type="GO" id="GO:0006742">
    <property type="term" value="P:NADP catabolic process"/>
    <property type="evidence" value="ECO:0007669"/>
    <property type="project" value="TreeGrafter"/>
</dbReference>
<dbReference type="CDD" id="cd03429">
    <property type="entry name" value="NUDIX_NADH_pyrophosphatase_Nudt13"/>
    <property type="match status" value="1"/>
</dbReference>
<dbReference type="FunFam" id="3.90.79.10:FF:000004">
    <property type="entry name" value="NADH pyrophosphatase"/>
    <property type="match status" value="1"/>
</dbReference>
<dbReference type="Gene3D" id="3.90.79.20">
    <property type="match status" value="1"/>
</dbReference>
<dbReference type="Gene3D" id="3.90.79.10">
    <property type="entry name" value="Nucleoside Triphosphate Pyrophosphohydrolase"/>
    <property type="match status" value="1"/>
</dbReference>
<dbReference type="HAMAP" id="MF_00297">
    <property type="entry name" value="Nudix_NudC"/>
    <property type="match status" value="1"/>
</dbReference>
<dbReference type="InterPro" id="IPR050241">
    <property type="entry name" value="NAD-cap_RNA_hydrolase_NudC"/>
</dbReference>
<dbReference type="InterPro" id="IPR049734">
    <property type="entry name" value="NudC-like_C"/>
</dbReference>
<dbReference type="InterPro" id="IPR015797">
    <property type="entry name" value="NUDIX_hydrolase-like_dom_sf"/>
</dbReference>
<dbReference type="InterPro" id="IPR020084">
    <property type="entry name" value="NUDIX_hydrolase_CS"/>
</dbReference>
<dbReference type="InterPro" id="IPR000086">
    <property type="entry name" value="NUDIX_hydrolase_dom"/>
</dbReference>
<dbReference type="InterPro" id="IPR022925">
    <property type="entry name" value="RNA_Hydrolase_NudC"/>
</dbReference>
<dbReference type="InterPro" id="IPR015376">
    <property type="entry name" value="Znr_NADH_PPase"/>
</dbReference>
<dbReference type="NCBIfam" id="NF001299">
    <property type="entry name" value="PRK00241.1"/>
    <property type="match status" value="1"/>
</dbReference>
<dbReference type="PANTHER" id="PTHR42904:SF6">
    <property type="entry name" value="NAD-CAPPED RNA HYDROLASE NUDT12"/>
    <property type="match status" value="1"/>
</dbReference>
<dbReference type="PANTHER" id="PTHR42904">
    <property type="entry name" value="NUDIX HYDROLASE, NUDC SUBFAMILY"/>
    <property type="match status" value="1"/>
</dbReference>
<dbReference type="Pfam" id="PF00293">
    <property type="entry name" value="NUDIX"/>
    <property type="match status" value="1"/>
</dbReference>
<dbReference type="Pfam" id="PF09297">
    <property type="entry name" value="Zn_ribbon_NUD"/>
    <property type="match status" value="1"/>
</dbReference>
<dbReference type="SUPFAM" id="SSF55811">
    <property type="entry name" value="Nudix"/>
    <property type="match status" value="2"/>
</dbReference>
<dbReference type="PROSITE" id="PS51462">
    <property type="entry name" value="NUDIX"/>
    <property type="match status" value="1"/>
</dbReference>
<dbReference type="PROSITE" id="PS00893">
    <property type="entry name" value="NUDIX_BOX"/>
    <property type="match status" value="1"/>
</dbReference>
<comment type="function">
    <text evidence="1">mRNA decapping enzyme that specifically removes the nicotinamide adenine dinucleotide (NAD) cap from a subset of mRNAs by hydrolyzing the diphosphate linkage to produce nicotinamide mononucleotide (NMN) and 5' monophosphate mRNA. The NAD-cap is present at the 5'-end of some mRNAs and stabilizes RNA against 5'-processing. Has preference for mRNAs with a 5'-end purine. Catalyzes the hydrolysis of a broad range of dinucleotide pyrophosphates.</text>
</comment>
<comment type="catalytic activity">
    <reaction evidence="1">
        <text>a 5'-end NAD(+)-phospho-ribonucleoside in mRNA + H2O = a 5'-end phospho-adenosine-phospho-ribonucleoside in mRNA + beta-nicotinamide D-ribonucleotide + 2 H(+)</text>
        <dbReference type="Rhea" id="RHEA:60876"/>
        <dbReference type="Rhea" id="RHEA-COMP:15698"/>
        <dbReference type="Rhea" id="RHEA-COMP:15719"/>
        <dbReference type="ChEBI" id="CHEBI:14649"/>
        <dbReference type="ChEBI" id="CHEBI:15377"/>
        <dbReference type="ChEBI" id="CHEBI:15378"/>
        <dbReference type="ChEBI" id="CHEBI:144029"/>
        <dbReference type="ChEBI" id="CHEBI:144051"/>
    </reaction>
    <physiologicalReaction direction="left-to-right" evidence="1">
        <dbReference type="Rhea" id="RHEA:60877"/>
    </physiologicalReaction>
</comment>
<comment type="catalytic activity">
    <reaction evidence="1">
        <text>NAD(+) + H2O = beta-nicotinamide D-ribonucleotide + AMP + 2 H(+)</text>
        <dbReference type="Rhea" id="RHEA:11800"/>
        <dbReference type="ChEBI" id="CHEBI:14649"/>
        <dbReference type="ChEBI" id="CHEBI:15377"/>
        <dbReference type="ChEBI" id="CHEBI:15378"/>
        <dbReference type="ChEBI" id="CHEBI:57540"/>
        <dbReference type="ChEBI" id="CHEBI:456215"/>
        <dbReference type="EC" id="3.6.1.22"/>
    </reaction>
</comment>
<comment type="catalytic activity">
    <reaction evidence="1">
        <text>NADH + H2O = reduced beta-nicotinamide D-ribonucleotide + AMP + 2 H(+)</text>
        <dbReference type="Rhea" id="RHEA:48868"/>
        <dbReference type="ChEBI" id="CHEBI:15377"/>
        <dbReference type="ChEBI" id="CHEBI:15378"/>
        <dbReference type="ChEBI" id="CHEBI:57945"/>
        <dbReference type="ChEBI" id="CHEBI:90832"/>
        <dbReference type="ChEBI" id="CHEBI:456215"/>
        <dbReference type="EC" id="3.6.1.22"/>
    </reaction>
</comment>
<comment type="cofactor">
    <cofactor evidence="1">
        <name>Mg(2+)</name>
        <dbReference type="ChEBI" id="CHEBI:18420"/>
    </cofactor>
    <cofactor evidence="1">
        <name>Mn(2+)</name>
        <dbReference type="ChEBI" id="CHEBI:29035"/>
    </cofactor>
    <text evidence="1">Divalent metal cations. Mg(2+) or Mn(2+).</text>
</comment>
<comment type="cofactor">
    <cofactor evidence="1">
        <name>Zn(2+)</name>
        <dbReference type="ChEBI" id="CHEBI:29105"/>
    </cofactor>
    <text evidence="1">Binds 1 zinc ion per subunit.</text>
</comment>
<comment type="subunit">
    <text evidence="1">Homodimer.</text>
</comment>
<comment type="similarity">
    <text evidence="1">Belongs to the Nudix hydrolase family. NudC subfamily.</text>
</comment>
<sequence>MKILQQDDFGYWLLTQGSNLYLVNNELPFGIAKDIDLEGLQAMQIGEWKNHPLWLVAEQESDEREYVSLSHLLSLPEDEFHILSRGVEINHFLKTHKFCGKCGHKTQQTQDELAVQCTHCGYQTYPVICPSIIVAVRRGHEILLANHKRHYSPNGGIYTTLAGFVEVGETFEQAVQREVFEETGISIKNLRYFGSQPWAFPNSQMVGFLADYESGEITLQESEIYDAQWFSYDQPLPELPPTGTIARKLIHATLELCKAEHKCD</sequence>
<protein>
    <recommendedName>
        <fullName evidence="1">NAD-capped RNA hydrolase NudC</fullName>
        <shortName evidence="1">DeNADding enzyme NudC</shortName>
        <ecNumber evidence="1">3.6.1.-</ecNumber>
    </recommendedName>
    <alternativeName>
        <fullName evidence="1">NADH pyrophosphatase</fullName>
        <ecNumber evidence="1">3.6.1.22</ecNumber>
    </alternativeName>
</protein>
<evidence type="ECO:0000255" key="1">
    <source>
        <dbReference type="HAMAP-Rule" id="MF_00297"/>
    </source>
</evidence>
<gene>
    <name evidence="1" type="primary">nudC</name>
    <name type="ordered locus">CGSHiGG_05380</name>
</gene>
<feature type="chain" id="PRO_1000071959" description="NAD-capped RNA hydrolase NudC">
    <location>
        <begin position="1"/>
        <end position="264"/>
    </location>
</feature>
<feature type="domain" description="Nudix hydrolase" evidence="1">
    <location>
        <begin position="126"/>
        <end position="253"/>
    </location>
</feature>
<feature type="short sequence motif" description="Nudix box" evidence="1">
    <location>
        <begin position="163"/>
        <end position="184"/>
    </location>
</feature>
<feature type="binding site" evidence="1">
    <location>
        <position position="99"/>
    </location>
    <ligand>
        <name>Zn(2+)</name>
        <dbReference type="ChEBI" id="CHEBI:29105"/>
    </ligand>
</feature>
<feature type="binding site" evidence="1">
    <location>
        <position position="102"/>
    </location>
    <ligand>
        <name>Zn(2+)</name>
        <dbReference type="ChEBI" id="CHEBI:29105"/>
    </ligand>
</feature>
<feature type="binding site" evidence="1">
    <location>
        <position position="112"/>
    </location>
    <ligand>
        <name>substrate</name>
    </ligand>
</feature>
<feature type="binding site" evidence="1">
    <location>
        <position position="117"/>
    </location>
    <ligand>
        <name>Zn(2+)</name>
        <dbReference type="ChEBI" id="CHEBI:29105"/>
    </ligand>
</feature>
<feature type="binding site" evidence="1">
    <location>
        <position position="120"/>
    </location>
    <ligand>
        <name>Zn(2+)</name>
        <dbReference type="ChEBI" id="CHEBI:29105"/>
    </ligand>
</feature>
<feature type="binding site" evidence="1">
    <location>
        <position position="125"/>
    </location>
    <ligand>
        <name>substrate</name>
    </ligand>
</feature>
<feature type="binding site" evidence="1">
    <location>
        <position position="162"/>
    </location>
    <ligand>
        <name>a divalent metal cation</name>
        <dbReference type="ChEBI" id="CHEBI:60240"/>
        <label>1</label>
    </ligand>
</feature>
<feature type="binding site" evidence="1">
    <location>
        <position position="178"/>
    </location>
    <ligand>
        <name>a divalent metal cation</name>
        <dbReference type="ChEBI" id="CHEBI:60240"/>
        <label>2</label>
    </ligand>
</feature>
<feature type="binding site" evidence="1">
    <location>
        <position position="178"/>
    </location>
    <ligand>
        <name>a divalent metal cation</name>
        <dbReference type="ChEBI" id="CHEBI:60240"/>
        <label>3</label>
    </ligand>
</feature>
<feature type="binding site" evidence="1">
    <location>
        <position position="182"/>
    </location>
    <ligand>
        <name>a divalent metal cation</name>
        <dbReference type="ChEBI" id="CHEBI:60240"/>
        <label>1</label>
    </ligand>
</feature>
<feature type="binding site" evidence="1">
    <location>
        <position position="182"/>
    </location>
    <ligand>
        <name>a divalent metal cation</name>
        <dbReference type="ChEBI" id="CHEBI:60240"/>
        <label>3</label>
    </ligand>
</feature>
<feature type="binding site" evidence="1">
    <location>
        <begin position="196"/>
        <end position="203"/>
    </location>
    <ligand>
        <name>substrate</name>
    </ligand>
</feature>
<feature type="binding site" evidence="1">
    <location>
        <position position="223"/>
    </location>
    <ligand>
        <name>a divalent metal cation</name>
        <dbReference type="ChEBI" id="CHEBI:60240"/>
        <label>1</label>
    </ligand>
</feature>
<feature type="binding site" evidence="1">
    <location>
        <position position="223"/>
    </location>
    <ligand>
        <name>a divalent metal cation</name>
        <dbReference type="ChEBI" id="CHEBI:60240"/>
        <label>3</label>
    </ligand>
</feature>
<feature type="binding site" evidence="1">
    <location>
        <position position="246"/>
    </location>
    <ligand>
        <name>substrate</name>
    </ligand>
</feature>
<accession>A5UGU3</accession>